<evidence type="ECO:0000255" key="1">
    <source>
        <dbReference type="HAMAP-Rule" id="MF_02235"/>
    </source>
</evidence>
<evidence type="ECO:0000269" key="2">
    <source>
    </source>
</evidence>
<evidence type="ECO:0000269" key="3">
    <source>
    </source>
</evidence>
<evidence type="ECO:0000269" key="4">
    <source>
    </source>
</evidence>
<evidence type="ECO:0000269" key="5">
    <source>
    </source>
</evidence>
<evidence type="ECO:0000303" key="6">
    <source>
    </source>
</evidence>
<evidence type="ECO:0000303" key="7">
    <source>
    </source>
</evidence>
<evidence type="ECO:0000303" key="8">
    <source>
    </source>
</evidence>
<evidence type="ECO:0000305" key="9"/>
<evidence type="ECO:0000305" key="10">
    <source>
    </source>
</evidence>
<evidence type="ECO:0000305" key="11">
    <source>
    </source>
</evidence>
<evidence type="ECO:0000312" key="12">
    <source>
        <dbReference type="EMBL" id="CBW21098.1"/>
    </source>
</evidence>
<evidence type="ECO:0007744" key="13">
    <source>
        <dbReference type="PDB" id="2FG6"/>
    </source>
</evidence>
<evidence type="ECO:0007744" key="14">
    <source>
        <dbReference type="PDB" id="2FG7"/>
    </source>
</evidence>
<evidence type="ECO:0007744" key="15">
    <source>
        <dbReference type="PDB" id="2G7M"/>
    </source>
</evidence>
<keyword id="KW-0002">3D-structure</keyword>
<keyword id="KW-0028">Amino-acid biosynthesis</keyword>
<keyword id="KW-0055">Arginine biosynthesis</keyword>
<keyword id="KW-0808">Transferase</keyword>
<comment type="function">
    <text evidence="2 3 4 6">Catalyzes the transfer of the carbamoyl group from carbamoyl phosphate to the delta-amino group of N(2)-succinyl-L-ornithine to produce N(2)-succinyl-L-citrulline (PubMed:16704984). Is essential for arginine biosynthesis (PubMed:12095263, PubMed:16704984). Has no activity with either L-ornithine or L-aspartate as substrate (PubMed:12095263, PubMed:16704984). Also has no detectable AOTCase activity, being unable to convert N(2)-acetyl-L-ornithine to N(2)-acetyl-L-citrulline (PubMed:16585758, PubMed:16704984).</text>
</comment>
<comment type="catalytic activity">
    <reaction evidence="4">
        <text>N(2)-succinyl-L-ornithine + carbamoyl phosphate = N(2)-succinyl-L-citrulline + phosphate + H(+)</text>
        <dbReference type="Rhea" id="RHEA:25884"/>
        <dbReference type="ChEBI" id="CHEBI:15378"/>
        <dbReference type="ChEBI" id="CHEBI:43474"/>
        <dbReference type="ChEBI" id="CHEBI:58228"/>
        <dbReference type="ChEBI" id="CHEBI:58514"/>
        <dbReference type="ChEBI" id="CHEBI:58862"/>
        <dbReference type="EC" id="2.1.3.11"/>
    </reaction>
    <physiologicalReaction direction="left-to-right" evidence="4">
        <dbReference type="Rhea" id="RHEA:25885"/>
    </physiologicalReaction>
</comment>
<comment type="pathway">
    <text evidence="2 4">Amino-acid biosynthesis; L-arginine biosynthesis.</text>
</comment>
<comment type="subunit">
    <text evidence="2">Homotrimer.</text>
</comment>
<comment type="disruption phenotype">
    <text evidence="6">Disruption of this gene results in mutants that require exogenous arginine for growth.</text>
</comment>
<comment type="similarity">
    <text evidence="1 9">Belongs to the aspartate/ornithine carbamoyltransferase superfamily. SOTCase family.</text>
</comment>
<proteinExistence type="evidence at protein level"/>
<name>SOTC_BACF6</name>
<reference key="1">
    <citation type="journal article" date="2010" name="Microbiology">
        <title>Twenty-eight divergent polysaccharide loci specifying within- and amongst-strain capsule diversity in three strains of Bacteroides fragilis.</title>
        <authorList>
            <person name="Patrick S."/>
            <person name="Blakely G.W."/>
            <person name="Houston S."/>
            <person name="Moore J."/>
            <person name="Abratt V.R."/>
            <person name="Bertalan M."/>
            <person name="Cerdeno-Tarraga A.M."/>
            <person name="Quail M.A."/>
            <person name="Corton N."/>
            <person name="Corton C."/>
            <person name="Bignell A."/>
            <person name="Barron A."/>
            <person name="Clark L."/>
            <person name="Bentley S.D."/>
            <person name="Parkhill J."/>
        </authorList>
    </citation>
    <scope>NUCLEOTIDE SEQUENCE [LARGE SCALE GENOMIC DNA]</scope>
    <source>
        <strain>638R</strain>
    </source>
</reference>
<reference key="2">
    <citation type="journal article" date="2006" name="J. Bacteriol.">
        <title>Acetylornithine transcarbamylase: a novel enzyme in arginine biosynthesis.</title>
        <authorList>
            <person name="Morizono H."/>
            <person name="Cabrera-Luque J."/>
            <person name="Shi D."/>
            <person name="Gallegos R."/>
            <person name="Yamaguchi S."/>
            <person name="Yu X."/>
            <person name="Allewell N.M."/>
            <person name="Malamy M.H."/>
            <person name="Tuchman M."/>
        </authorList>
    </citation>
    <scope>LACK OF AOTCASE ACTIVITY</scope>
    <source>
        <strain>638R / TM 4000</strain>
    </source>
</reference>
<reference key="3">
    <citation type="journal article" date="2002" name="J. Mol. Biol.">
        <title>Crystal structure of a transcarbamylase-like protein from the anaerobic bacterium Bacteroides fragilis at 2.0 A resolution.</title>
        <authorList>
            <person name="Shi D."/>
            <person name="Gallegos R."/>
            <person name="DePonte J. III"/>
            <person name="Morizono H."/>
            <person name="Yu X."/>
            <person name="Allewell N.M."/>
            <person name="Malamy M."/>
            <person name="Tuchman M."/>
        </authorList>
    </citation>
    <scope>X-RAY CRYSTALLOGRAPHY (2.0 ANGSTROMS) OF 1-318</scope>
    <scope>FUNCTION</scope>
    <scope>PATHWAY</scope>
    <scope>DISRUPTION PHENOTYPE</scope>
    <scope>SUBUNIT</scope>
    <source>
        <strain>638R / TM 4000</strain>
    </source>
</reference>
<reference evidence="13 14" key="4">
    <citation type="journal article" date="2006" name="J. Biol. Chem.">
        <title>Structure and catalytic mechanism of a novel N-succinyl-L-ornithine transcarbamylase in arginine biosynthesis of Bacteroides fragilis.</title>
        <authorList>
            <person name="Shi D."/>
            <person name="Morizono H."/>
            <person name="Cabrera-Luque J."/>
            <person name="Yu X."/>
            <person name="Roth L."/>
            <person name="Malamy M.H."/>
            <person name="Allewell N.M."/>
            <person name="Tuchman M."/>
        </authorList>
    </citation>
    <scope>X-RAY CRYSTALLOGRAPHY (2.80 ANGSTROMS) IN COMPLEXES WITH N-SUCCINYL-L-NORVALINE AND CARBAMOYL PHOSPHATE</scope>
    <scope>FUNCTION</scope>
    <scope>CATALYTIC ACTIVITY</scope>
    <scope>SUBSTRATE SPECIFICITY</scope>
    <scope>PATHWAY</scope>
    <scope>MUTAGENESIS OF PRO-90</scope>
    <scope>REACTION MECHANISM</scope>
    <source>
        <strain>638R / TM 4000</strain>
    </source>
</reference>
<reference evidence="15" key="5">
    <citation type="journal article" date="2007" name="Protein Sci.">
        <title>A single mutation in the active site swaps the substrate specificity of N-acetyl-L-ornithine transcarbamylase and N-succinyl-L-ornithine transcarbamylase.</title>
        <authorList>
            <person name="Shi D."/>
            <person name="Yu X."/>
            <person name="Cabrera-Luque J."/>
            <person name="Chen T.Y."/>
            <person name="Roth L."/>
            <person name="Morizono H."/>
            <person name="Allewell N.M."/>
            <person name="Tuchman M."/>
        </authorList>
    </citation>
    <scope>X-RAY CRYSTALLOGRAPHY (2.90 ANGSTROMS) OF MUTANT GLU-90 IN COMPLEX WITH CARBAMOYL PHOSPHATE AND N-ACETYLNORVALINE</scope>
</reference>
<gene>
    <name evidence="7 8" type="primary">argF'</name>
    <name evidence="12" type="synonym">argF</name>
    <name evidence="12" type="ordered locus">BF638R_0504</name>
</gene>
<feature type="chain" id="PRO_0000447708" description="N-succinylornithine carbamoyltransferase">
    <location>
        <begin position="1"/>
        <end position="318"/>
    </location>
</feature>
<feature type="binding site" description="in other chain" evidence="4 5 14 15">
    <location>
        <begin position="47"/>
        <end position="50"/>
    </location>
    <ligand>
        <name>carbamoyl phosphate</name>
        <dbReference type="ChEBI" id="CHEBI:58228"/>
        <note>ligand shared between two neighboring subunits</note>
    </ligand>
</feature>
<feature type="binding site" evidence="4 5 14 15">
    <location>
        <position position="75"/>
    </location>
    <ligand>
        <name>carbamoyl phosphate</name>
        <dbReference type="ChEBI" id="CHEBI:58228"/>
        <note>ligand shared between two neighboring subunits</note>
    </ligand>
</feature>
<feature type="binding site" description="in other chain" evidence="4 5 14 15">
    <location>
        <position position="110"/>
    </location>
    <ligand>
        <name>carbamoyl phosphate</name>
        <dbReference type="ChEBI" id="CHEBI:58228"/>
        <note>ligand shared between two neighboring subunits</note>
    </ligand>
</feature>
<feature type="binding site" evidence="10 11 13 14">
    <location>
        <position position="142"/>
    </location>
    <ligand>
        <name>N(2)-succinyl-L-ornithine</name>
        <dbReference type="ChEBI" id="CHEBI:58514"/>
    </ligand>
</feature>
<feature type="binding site" description="in other chain" evidence="4 5 14 15">
    <location>
        <begin position="147"/>
        <end position="150"/>
    </location>
    <ligand>
        <name>carbamoyl phosphate</name>
        <dbReference type="ChEBI" id="CHEBI:58228"/>
        <note>ligand shared between two neighboring subunits</note>
    </ligand>
</feature>
<feature type="binding site" evidence="10 13 14">
    <location>
        <position position="176"/>
    </location>
    <ligand>
        <name>N(2)-succinyl-L-ornithine</name>
        <dbReference type="ChEBI" id="CHEBI:58514"/>
    </ligand>
</feature>
<feature type="binding site" evidence="10 11 13 14">
    <location>
        <position position="236"/>
    </location>
    <ligand>
        <name>N(2)-succinyl-L-ornithine</name>
        <dbReference type="ChEBI" id="CHEBI:58514"/>
    </ligand>
</feature>
<feature type="binding site" description="in other chain" evidence="4 5 14 15">
    <location>
        <begin position="274"/>
        <end position="275"/>
    </location>
    <ligand>
        <name>carbamoyl phosphate</name>
        <dbReference type="ChEBI" id="CHEBI:58228"/>
        <note>ligand shared between two neighboring subunits</note>
    </ligand>
</feature>
<feature type="binding site" evidence="10 13 14">
    <location>
        <position position="278"/>
    </location>
    <ligand>
        <name>N(2)-succinyl-L-ornithine</name>
        <dbReference type="ChEBI" id="CHEBI:58514"/>
    </ligand>
</feature>
<feature type="binding site" description="in other chain" evidence="4 5 14 15">
    <location>
        <position position="302"/>
    </location>
    <ligand>
        <name>carbamoyl phosphate</name>
        <dbReference type="ChEBI" id="CHEBI:58228"/>
        <note>ligand shared between two neighboring subunits</note>
    </ligand>
</feature>
<feature type="site" description="Key residue in conferring substrate specificity for N-succinyl-L-ornithine versus N-acetyl-L-ornithine" evidence="4">
    <location>
        <position position="90"/>
    </location>
</feature>
<feature type="mutagenesis site" description="Generates an enzyme capable of carbamoylation of N-acetyl-L-ornithine at a rate 7-times greater than N-succinyl-L-ornithine, thus practically converting it from a N-succinylornithine transcarbamylase (SOTCase) to a N-acetylornithine transcarbamylase (AOTCase)." evidence="4">
    <original>P</original>
    <variation>E</variation>
    <location>
        <position position="90"/>
    </location>
</feature>
<dbReference type="EC" id="2.1.3.11" evidence="4"/>
<dbReference type="EMBL" id="FQ312004">
    <property type="protein sequence ID" value="CBW21098.1"/>
    <property type="molecule type" value="Genomic_DNA"/>
</dbReference>
<dbReference type="RefSeq" id="WP_005796520.1">
    <property type="nucleotide sequence ID" value="NZ_CAXSTL010000001.1"/>
</dbReference>
<dbReference type="PDB" id="1JS1">
    <property type="method" value="X-ray"/>
    <property type="resolution" value="2.00 A"/>
    <property type="chains" value="X/Y/Z=1-318"/>
</dbReference>
<dbReference type="PDB" id="2FG6">
    <property type="method" value="X-ray"/>
    <property type="resolution" value="2.80 A"/>
    <property type="chains" value="C/D/E/X/Y/Z=1-318"/>
</dbReference>
<dbReference type="PDB" id="2FG7">
    <property type="method" value="X-ray"/>
    <property type="resolution" value="2.90 A"/>
    <property type="chains" value="C/D/E/X/Y/Z=1-318"/>
</dbReference>
<dbReference type="PDB" id="2G7M">
    <property type="method" value="X-ray"/>
    <property type="resolution" value="2.90 A"/>
    <property type="chains" value="C/D/E/X/Y/Z=1-318"/>
</dbReference>
<dbReference type="PDBsum" id="1JS1"/>
<dbReference type="PDBsum" id="2FG6"/>
<dbReference type="PDBsum" id="2FG7"/>
<dbReference type="PDBsum" id="2G7M"/>
<dbReference type="SMR" id="E1WKT5"/>
<dbReference type="KEGG" id="bfg:BF638R_0504"/>
<dbReference type="PATRIC" id="fig|862962.3.peg.520"/>
<dbReference type="HOGENOM" id="CLU_043846_3_3_10"/>
<dbReference type="UniPathway" id="UPA00068"/>
<dbReference type="Proteomes" id="UP000008560">
    <property type="component" value="Chromosome"/>
</dbReference>
<dbReference type="GO" id="GO:0016597">
    <property type="term" value="F:amino acid binding"/>
    <property type="evidence" value="ECO:0007669"/>
    <property type="project" value="InterPro"/>
</dbReference>
<dbReference type="GO" id="GO:0004585">
    <property type="term" value="F:ornithine carbamoyltransferase activity"/>
    <property type="evidence" value="ECO:0007669"/>
    <property type="project" value="InterPro"/>
</dbReference>
<dbReference type="GO" id="GO:0042450">
    <property type="term" value="P:arginine biosynthetic process via ornithine"/>
    <property type="evidence" value="ECO:0007669"/>
    <property type="project" value="TreeGrafter"/>
</dbReference>
<dbReference type="GO" id="GO:0019240">
    <property type="term" value="P:citrulline biosynthetic process"/>
    <property type="evidence" value="ECO:0007669"/>
    <property type="project" value="TreeGrafter"/>
</dbReference>
<dbReference type="GO" id="GO:0006526">
    <property type="term" value="P:L-arginine biosynthetic process"/>
    <property type="evidence" value="ECO:0007669"/>
    <property type="project" value="UniProtKB-UniRule"/>
</dbReference>
<dbReference type="FunFam" id="3.40.50.1370:FF:000013">
    <property type="entry name" value="N-acetylornithine carbamoyltransferase"/>
    <property type="match status" value="1"/>
</dbReference>
<dbReference type="Gene3D" id="3.40.50.1370">
    <property type="entry name" value="Aspartate/ornithine carbamoyltransferase"/>
    <property type="match status" value="2"/>
</dbReference>
<dbReference type="HAMAP" id="MF_02235">
    <property type="entry name" value="SOTCase"/>
    <property type="match status" value="1"/>
</dbReference>
<dbReference type="InterPro" id="IPR043696">
    <property type="entry name" value="ArgF'-like"/>
</dbReference>
<dbReference type="InterPro" id="IPR006132">
    <property type="entry name" value="Asp/Orn_carbamoyltranf_P-bd"/>
</dbReference>
<dbReference type="InterPro" id="IPR006130">
    <property type="entry name" value="Asp/Orn_carbamoylTrfase"/>
</dbReference>
<dbReference type="InterPro" id="IPR036901">
    <property type="entry name" value="Asp/Orn_carbamoylTrfase_sf"/>
</dbReference>
<dbReference type="InterPro" id="IPR006131">
    <property type="entry name" value="Asp_carbamoyltransf_Asp/Orn-bd"/>
</dbReference>
<dbReference type="PANTHER" id="PTHR45753">
    <property type="entry name" value="ORNITHINE CARBAMOYLTRANSFERASE, MITOCHONDRIAL"/>
    <property type="match status" value="1"/>
</dbReference>
<dbReference type="PANTHER" id="PTHR45753:SF3">
    <property type="entry name" value="ORNITHINE TRANSCARBAMYLASE, MITOCHONDRIAL"/>
    <property type="match status" value="1"/>
</dbReference>
<dbReference type="Pfam" id="PF00185">
    <property type="entry name" value="OTCace"/>
    <property type="match status" value="1"/>
</dbReference>
<dbReference type="Pfam" id="PF02729">
    <property type="entry name" value="OTCace_N"/>
    <property type="match status" value="1"/>
</dbReference>
<dbReference type="PRINTS" id="PR00100">
    <property type="entry name" value="AOTCASE"/>
</dbReference>
<dbReference type="PRINTS" id="PR00101">
    <property type="entry name" value="ATCASE"/>
</dbReference>
<dbReference type="SUPFAM" id="SSF53671">
    <property type="entry name" value="Aspartate/ornithine carbamoyltransferase"/>
    <property type="match status" value="1"/>
</dbReference>
<sequence>MKKFTCVQDIGDLKSALAESFEIKKDRFKYVELGRNKTLLMIFFNSSLRTRLSTQKAALNLGMNVIVLDINQGAWKLETERGVIMDGDKPEHLLEAIPVMGCYCDIIGVRSFARFENREYDYNEVIINQFIQHSGRPVFSMEAATRHPLQSFADLITIEEYKKTARPKVVMTWAPHPRPLPQAVPNSFAEWMNATDYEFVITHPEGYELDPKFVGNARVEYDQMKAFEGADFIYAKNWAAYTGDNYGQILSTDRNWTVGDRQMAVTNNAYFMHCLPVRRNMIVTDDVIESPQSIVIPEAANREISATVVLKRLLENLP</sequence>
<accession>E1WKT5</accession>
<protein>
    <recommendedName>
        <fullName evidence="10">N-succinylornithine carbamoyltransferase</fullName>
        <ecNumber evidence="4">2.1.3.11</ecNumber>
    </recommendedName>
    <alternativeName>
        <fullName evidence="8">N-succinyl-L-ornithine transcarbamylase</fullName>
        <shortName evidence="8">SOTCase</shortName>
    </alternativeName>
</protein>
<organism>
    <name type="scientific">Bacteroides fragilis (strain 638R)</name>
    <dbReference type="NCBI Taxonomy" id="862962"/>
    <lineage>
        <taxon>Bacteria</taxon>
        <taxon>Pseudomonadati</taxon>
        <taxon>Bacteroidota</taxon>
        <taxon>Bacteroidia</taxon>
        <taxon>Bacteroidales</taxon>
        <taxon>Bacteroidaceae</taxon>
        <taxon>Bacteroides</taxon>
    </lineage>
</organism>